<evidence type="ECO:0000255" key="1">
    <source>
        <dbReference type="HAMAP-Rule" id="MF_01201"/>
    </source>
</evidence>
<reference key="1">
    <citation type="submission" date="2007-02" db="EMBL/GenBank/DDBJ databases">
        <title>Complete sequence of chromosome of Shewanella baltica OS155.</title>
        <authorList>
            <consortium name="US DOE Joint Genome Institute"/>
            <person name="Copeland A."/>
            <person name="Lucas S."/>
            <person name="Lapidus A."/>
            <person name="Barry K."/>
            <person name="Detter J.C."/>
            <person name="Glavina del Rio T."/>
            <person name="Hammon N."/>
            <person name="Israni S."/>
            <person name="Dalin E."/>
            <person name="Tice H."/>
            <person name="Pitluck S."/>
            <person name="Sims D.R."/>
            <person name="Brettin T."/>
            <person name="Bruce D."/>
            <person name="Han C."/>
            <person name="Tapia R."/>
            <person name="Brainard J."/>
            <person name="Schmutz J."/>
            <person name="Larimer F."/>
            <person name="Land M."/>
            <person name="Hauser L."/>
            <person name="Kyrpides N."/>
            <person name="Mikhailova N."/>
            <person name="Brettar I."/>
            <person name="Klappenbach J."/>
            <person name="Konstantinidis K."/>
            <person name="Rodrigues J."/>
            <person name="Tiedje J."/>
            <person name="Richardson P."/>
        </authorList>
    </citation>
    <scope>NUCLEOTIDE SEQUENCE [LARGE SCALE GENOMIC DNA]</scope>
    <source>
        <strain>OS155 / ATCC BAA-1091</strain>
    </source>
</reference>
<gene>
    <name type="primary">alr</name>
    <name type="ordered locus">Sbal_3637</name>
</gene>
<protein>
    <recommendedName>
        <fullName evidence="1">Alanine racemase</fullName>
        <ecNumber evidence="1">5.1.1.1</ecNumber>
    </recommendedName>
</protein>
<accession>A3D8P9</accession>
<keyword id="KW-0413">Isomerase</keyword>
<keyword id="KW-0663">Pyridoxal phosphate</keyword>
<keyword id="KW-1185">Reference proteome</keyword>
<proteinExistence type="inferred from homology"/>
<organism>
    <name type="scientific">Shewanella baltica (strain OS155 / ATCC BAA-1091)</name>
    <dbReference type="NCBI Taxonomy" id="325240"/>
    <lineage>
        <taxon>Bacteria</taxon>
        <taxon>Pseudomonadati</taxon>
        <taxon>Pseudomonadota</taxon>
        <taxon>Gammaproteobacteria</taxon>
        <taxon>Alteromonadales</taxon>
        <taxon>Shewanellaceae</taxon>
        <taxon>Shewanella</taxon>
    </lineage>
</organism>
<comment type="function">
    <text evidence="1">Catalyzes the interconversion of L-alanine and D-alanine. May also act on other amino acids.</text>
</comment>
<comment type="catalytic activity">
    <reaction evidence="1">
        <text>L-alanine = D-alanine</text>
        <dbReference type="Rhea" id="RHEA:20249"/>
        <dbReference type="ChEBI" id="CHEBI:57416"/>
        <dbReference type="ChEBI" id="CHEBI:57972"/>
        <dbReference type="EC" id="5.1.1.1"/>
    </reaction>
</comment>
<comment type="cofactor">
    <cofactor evidence="1">
        <name>pyridoxal 5'-phosphate</name>
        <dbReference type="ChEBI" id="CHEBI:597326"/>
    </cofactor>
</comment>
<comment type="pathway">
    <text evidence="1">Amino-acid biosynthesis; D-alanine biosynthesis; D-alanine from L-alanine: step 1/1.</text>
</comment>
<comment type="similarity">
    <text evidence="1">Belongs to the alanine racemase family.</text>
</comment>
<dbReference type="EC" id="5.1.1.1" evidence="1"/>
<dbReference type="EMBL" id="CP000563">
    <property type="protein sequence ID" value="ABN63112.1"/>
    <property type="molecule type" value="Genomic_DNA"/>
</dbReference>
<dbReference type="RefSeq" id="WP_011847809.1">
    <property type="nucleotide sequence ID" value="NC_009052.1"/>
</dbReference>
<dbReference type="SMR" id="A3D8P9"/>
<dbReference type="STRING" id="325240.Sbal_3637"/>
<dbReference type="KEGG" id="sbl:Sbal_3637"/>
<dbReference type="HOGENOM" id="CLU_028393_1_0_6"/>
<dbReference type="OrthoDB" id="9813814at2"/>
<dbReference type="UniPathway" id="UPA00042">
    <property type="reaction ID" value="UER00497"/>
</dbReference>
<dbReference type="Proteomes" id="UP000001557">
    <property type="component" value="Chromosome"/>
</dbReference>
<dbReference type="GO" id="GO:0005829">
    <property type="term" value="C:cytosol"/>
    <property type="evidence" value="ECO:0007669"/>
    <property type="project" value="TreeGrafter"/>
</dbReference>
<dbReference type="GO" id="GO:0008784">
    <property type="term" value="F:alanine racemase activity"/>
    <property type="evidence" value="ECO:0007669"/>
    <property type="project" value="UniProtKB-UniRule"/>
</dbReference>
<dbReference type="GO" id="GO:0030170">
    <property type="term" value="F:pyridoxal phosphate binding"/>
    <property type="evidence" value="ECO:0007669"/>
    <property type="project" value="UniProtKB-UniRule"/>
</dbReference>
<dbReference type="GO" id="GO:0030632">
    <property type="term" value="P:D-alanine biosynthetic process"/>
    <property type="evidence" value="ECO:0007669"/>
    <property type="project" value="UniProtKB-UniRule"/>
</dbReference>
<dbReference type="CDD" id="cd06827">
    <property type="entry name" value="PLPDE_III_AR_proteobact"/>
    <property type="match status" value="1"/>
</dbReference>
<dbReference type="FunFam" id="2.40.37.10:FF:000002">
    <property type="entry name" value="Alanine racemase"/>
    <property type="match status" value="1"/>
</dbReference>
<dbReference type="FunFam" id="3.20.20.10:FF:000002">
    <property type="entry name" value="Alanine racemase"/>
    <property type="match status" value="1"/>
</dbReference>
<dbReference type="Gene3D" id="3.20.20.10">
    <property type="entry name" value="Alanine racemase"/>
    <property type="match status" value="1"/>
</dbReference>
<dbReference type="Gene3D" id="2.40.37.10">
    <property type="entry name" value="Lyase, Ornithine Decarboxylase, Chain A, domain 1"/>
    <property type="match status" value="1"/>
</dbReference>
<dbReference type="HAMAP" id="MF_01201">
    <property type="entry name" value="Ala_racemase"/>
    <property type="match status" value="1"/>
</dbReference>
<dbReference type="InterPro" id="IPR000821">
    <property type="entry name" value="Ala_racemase"/>
</dbReference>
<dbReference type="InterPro" id="IPR009006">
    <property type="entry name" value="Ala_racemase/Decarboxylase_C"/>
</dbReference>
<dbReference type="InterPro" id="IPR011079">
    <property type="entry name" value="Ala_racemase_C"/>
</dbReference>
<dbReference type="InterPro" id="IPR001608">
    <property type="entry name" value="Ala_racemase_N"/>
</dbReference>
<dbReference type="InterPro" id="IPR020622">
    <property type="entry name" value="Ala_racemase_pyridoxalP-BS"/>
</dbReference>
<dbReference type="InterPro" id="IPR029066">
    <property type="entry name" value="PLP-binding_barrel"/>
</dbReference>
<dbReference type="NCBIfam" id="TIGR00492">
    <property type="entry name" value="alr"/>
    <property type="match status" value="1"/>
</dbReference>
<dbReference type="PANTHER" id="PTHR30511">
    <property type="entry name" value="ALANINE RACEMASE"/>
    <property type="match status" value="1"/>
</dbReference>
<dbReference type="PANTHER" id="PTHR30511:SF4">
    <property type="entry name" value="ALANINE RACEMASE, BIOSYNTHETIC"/>
    <property type="match status" value="1"/>
</dbReference>
<dbReference type="Pfam" id="PF00842">
    <property type="entry name" value="Ala_racemase_C"/>
    <property type="match status" value="1"/>
</dbReference>
<dbReference type="Pfam" id="PF01168">
    <property type="entry name" value="Ala_racemase_N"/>
    <property type="match status" value="1"/>
</dbReference>
<dbReference type="PRINTS" id="PR00992">
    <property type="entry name" value="ALARACEMASE"/>
</dbReference>
<dbReference type="SMART" id="SM01005">
    <property type="entry name" value="Ala_racemase_C"/>
    <property type="match status" value="1"/>
</dbReference>
<dbReference type="SUPFAM" id="SSF50621">
    <property type="entry name" value="Alanine racemase C-terminal domain-like"/>
    <property type="match status" value="1"/>
</dbReference>
<dbReference type="SUPFAM" id="SSF51419">
    <property type="entry name" value="PLP-binding barrel"/>
    <property type="match status" value="1"/>
</dbReference>
<dbReference type="PROSITE" id="PS00395">
    <property type="entry name" value="ALANINE_RACEMASE"/>
    <property type="match status" value="1"/>
</dbReference>
<feature type="chain" id="PRO_1000164610" description="Alanine racemase">
    <location>
        <begin position="1"/>
        <end position="358"/>
    </location>
</feature>
<feature type="active site" description="Proton acceptor; specific for D-alanine" evidence="1">
    <location>
        <position position="35"/>
    </location>
</feature>
<feature type="active site" description="Proton acceptor; specific for L-alanine" evidence="1">
    <location>
        <position position="255"/>
    </location>
</feature>
<feature type="binding site" evidence="1">
    <location>
        <position position="130"/>
    </location>
    <ligand>
        <name>substrate</name>
    </ligand>
</feature>
<feature type="binding site" evidence="1">
    <location>
        <position position="303"/>
    </location>
    <ligand>
        <name>substrate</name>
    </ligand>
</feature>
<feature type="modified residue" description="N6-(pyridoxal phosphate)lysine" evidence="1">
    <location>
        <position position="35"/>
    </location>
</feature>
<sequence>MNPFPRAEISSSALQTNLAALRQQAPASRVMAVVKANGYGHGLLNVANCLVSADGFGLARLDEALELRAGGVTARLLLLEGFFRATDLPLLVGHDIDTVVHHSSQLEMLEQTVLSKPVTVWLKVDSGMHRLGFTPEQFSTVYDRLMACPNVAKPIHLMTHFACADEPDNTYTSVQMAAFNSLTAGLPGFRTLANSAGALYWPQSQGDWIRPGIALYGVSPVTGDCGANHGLVPAMELVSQLIAVRDHKANQPVGYGCFWTAKQDTRLGVVAIGYGDGYPRNAPEGTPVWVNGRRVPIVGRVSMDMLTVDLGQDAQDKVGDSALLWGKALPVEEVAEHIGTIAYELVTKLTPRVAVCLA</sequence>
<name>ALR_SHEB5</name>